<reference key="1">
    <citation type="journal article" date="2008" name="Proc. Natl. Acad. Sci. U.S.A.">
        <title>Nitrogen fixation island and rhizosphere competence traits in the genome of root-associated Pseudomonas stutzeri A1501.</title>
        <authorList>
            <person name="Yan Y."/>
            <person name="Yang J."/>
            <person name="Dou Y."/>
            <person name="Chen M."/>
            <person name="Ping S."/>
            <person name="Peng J."/>
            <person name="Lu W."/>
            <person name="Zhang W."/>
            <person name="Yao Z."/>
            <person name="Li H."/>
            <person name="Liu W."/>
            <person name="He S."/>
            <person name="Geng L."/>
            <person name="Zhang X."/>
            <person name="Yang F."/>
            <person name="Yu H."/>
            <person name="Zhan Y."/>
            <person name="Li D."/>
            <person name="Lin Z."/>
            <person name="Wang Y."/>
            <person name="Elmerich C."/>
            <person name="Lin M."/>
            <person name="Jin Q."/>
        </authorList>
    </citation>
    <scope>NUCLEOTIDE SEQUENCE [LARGE SCALE GENOMIC DNA]</scope>
    <source>
        <strain>A1501</strain>
    </source>
</reference>
<organism>
    <name type="scientific">Stutzerimonas stutzeri (strain A1501)</name>
    <name type="common">Pseudomonas stutzeri</name>
    <dbReference type="NCBI Taxonomy" id="379731"/>
    <lineage>
        <taxon>Bacteria</taxon>
        <taxon>Pseudomonadati</taxon>
        <taxon>Pseudomonadota</taxon>
        <taxon>Gammaproteobacteria</taxon>
        <taxon>Pseudomonadales</taxon>
        <taxon>Pseudomonadaceae</taxon>
        <taxon>Stutzerimonas</taxon>
    </lineage>
</organism>
<protein>
    <recommendedName>
        <fullName evidence="1">1-deoxy-D-xylulose-5-phosphate synthase</fullName>
        <ecNumber evidence="1">2.2.1.7</ecNumber>
    </recommendedName>
    <alternativeName>
        <fullName evidence="1">1-deoxyxylulose-5-phosphate synthase</fullName>
        <shortName evidence="1">DXP synthase</shortName>
        <shortName evidence="1">DXPS</shortName>
    </alternativeName>
</protein>
<comment type="function">
    <text evidence="1">Catalyzes the acyloin condensation reaction between C atoms 2 and 3 of pyruvate and glyceraldehyde 3-phosphate to yield 1-deoxy-D-xylulose-5-phosphate (DXP).</text>
</comment>
<comment type="catalytic activity">
    <reaction evidence="1">
        <text>D-glyceraldehyde 3-phosphate + pyruvate + H(+) = 1-deoxy-D-xylulose 5-phosphate + CO2</text>
        <dbReference type="Rhea" id="RHEA:12605"/>
        <dbReference type="ChEBI" id="CHEBI:15361"/>
        <dbReference type="ChEBI" id="CHEBI:15378"/>
        <dbReference type="ChEBI" id="CHEBI:16526"/>
        <dbReference type="ChEBI" id="CHEBI:57792"/>
        <dbReference type="ChEBI" id="CHEBI:59776"/>
        <dbReference type="EC" id="2.2.1.7"/>
    </reaction>
</comment>
<comment type="cofactor">
    <cofactor evidence="1">
        <name>Mg(2+)</name>
        <dbReference type="ChEBI" id="CHEBI:18420"/>
    </cofactor>
    <text evidence="1">Binds 1 Mg(2+) ion per subunit.</text>
</comment>
<comment type="cofactor">
    <cofactor evidence="1">
        <name>thiamine diphosphate</name>
        <dbReference type="ChEBI" id="CHEBI:58937"/>
    </cofactor>
    <text evidence="1">Binds 1 thiamine pyrophosphate per subunit.</text>
</comment>
<comment type="pathway">
    <text evidence="1">Metabolic intermediate biosynthesis; 1-deoxy-D-xylulose 5-phosphate biosynthesis; 1-deoxy-D-xylulose 5-phosphate from D-glyceraldehyde 3-phosphate and pyruvate: step 1/1.</text>
</comment>
<comment type="subunit">
    <text evidence="1">Homodimer.</text>
</comment>
<comment type="similarity">
    <text evidence="1">Belongs to the transketolase family. DXPS subfamily.</text>
</comment>
<name>DXS_STUS1</name>
<gene>
    <name evidence="1" type="primary">dxs</name>
    <name type="ordered locus">PST_3706</name>
</gene>
<sequence length="632" mass="68422">MPKTFHEIPRVRPATPVLDRAATPEQLRRLGEAELEELANELRQELLYSVGRTGGHFGAGLGVIELTIALHYVYDTPDDRLVWDVGHQAYPHKILTGRRERMGTLRQKDGLAAFPRRVESEYDTFGVGHSSTSISAALGMAVAARLKGEQRKSIAVIGDGALTAGMAFEALNHAPEVGANMLVVLNDNDMSISRNVGGLSNYLAKILSSRTYSSMREGSKKILSRLPGAWEIARRTEEYAKGMLVPGTLFEELGWNYIGPIDGHDLPTLIATLRNMRDLDGPQFLHVVTKKGKGFAPAEADPITWHAISKLEPVGAPPAPKKPTGPKYSNVFGQWLCDMAAADPRLTGITPAMKEGSDLVAFSERYPDRYFDVAIAEQHAVTLAAGMACEGLKPVVAIYSTFLQRAYDQLIHDVAVQNLDVLFAIDRAGLVGEDGPTHAGSFDLSYLRCIPGMLVMTPSDENEMRRMLTTGYHFEGPAAVRYPRGSGPNASIEPALEPLEIGKAVVRRRGSKVALLVFGVQLPEALQVGDALDATVVDMRFVKPLDEALLRELAGSHELLVTVEENSIMGGAGSAVAEFLAAEGVLRPILHLGLPDYYVEHAKPSEMLAECGLDAAGIEVAVRKRLAALGKA</sequence>
<proteinExistence type="inferred from homology"/>
<evidence type="ECO:0000255" key="1">
    <source>
        <dbReference type="HAMAP-Rule" id="MF_00315"/>
    </source>
</evidence>
<dbReference type="EC" id="2.2.1.7" evidence="1"/>
<dbReference type="EMBL" id="CP000304">
    <property type="protein sequence ID" value="ABP81329.1"/>
    <property type="molecule type" value="Genomic_DNA"/>
</dbReference>
<dbReference type="RefSeq" id="WP_011914721.1">
    <property type="nucleotide sequence ID" value="NC_009434.1"/>
</dbReference>
<dbReference type="SMR" id="A4VQS8"/>
<dbReference type="KEGG" id="psa:PST_3706"/>
<dbReference type="eggNOG" id="COG1154">
    <property type="taxonomic scope" value="Bacteria"/>
</dbReference>
<dbReference type="HOGENOM" id="CLU_009227_1_4_6"/>
<dbReference type="UniPathway" id="UPA00064">
    <property type="reaction ID" value="UER00091"/>
</dbReference>
<dbReference type="Proteomes" id="UP000000233">
    <property type="component" value="Chromosome"/>
</dbReference>
<dbReference type="GO" id="GO:0005829">
    <property type="term" value="C:cytosol"/>
    <property type="evidence" value="ECO:0007669"/>
    <property type="project" value="TreeGrafter"/>
</dbReference>
<dbReference type="GO" id="GO:0008661">
    <property type="term" value="F:1-deoxy-D-xylulose-5-phosphate synthase activity"/>
    <property type="evidence" value="ECO:0007669"/>
    <property type="project" value="UniProtKB-UniRule"/>
</dbReference>
<dbReference type="GO" id="GO:0000287">
    <property type="term" value="F:magnesium ion binding"/>
    <property type="evidence" value="ECO:0007669"/>
    <property type="project" value="UniProtKB-UniRule"/>
</dbReference>
<dbReference type="GO" id="GO:0030976">
    <property type="term" value="F:thiamine pyrophosphate binding"/>
    <property type="evidence" value="ECO:0007669"/>
    <property type="project" value="UniProtKB-UniRule"/>
</dbReference>
<dbReference type="GO" id="GO:0052865">
    <property type="term" value="P:1-deoxy-D-xylulose 5-phosphate biosynthetic process"/>
    <property type="evidence" value="ECO:0007669"/>
    <property type="project" value="UniProtKB-UniPathway"/>
</dbReference>
<dbReference type="GO" id="GO:0019288">
    <property type="term" value="P:isopentenyl diphosphate biosynthetic process, methylerythritol 4-phosphate pathway"/>
    <property type="evidence" value="ECO:0007669"/>
    <property type="project" value="TreeGrafter"/>
</dbReference>
<dbReference type="GO" id="GO:0016114">
    <property type="term" value="P:terpenoid biosynthetic process"/>
    <property type="evidence" value="ECO:0007669"/>
    <property type="project" value="UniProtKB-UniRule"/>
</dbReference>
<dbReference type="GO" id="GO:0009228">
    <property type="term" value="P:thiamine biosynthetic process"/>
    <property type="evidence" value="ECO:0007669"/>
    <property type="project" value="UniProtKB-UniRule"/>
</dbReference>
<dbReference type="CDD" id="cd02007">
    <property type="entry name" value="TPP_DXS"/>
    <property type="match status" value="1"/>
</dbReference>
<dbReference type="CDD" id="cd07033">
    <property type="entry name" value="TPP_PYR_DXS_TK_like"/>
    <property type="match status" value="1"/>
</dbReference>
<dbReference type="FunFam" id="3.40.50.920:FF:000002">
    <property type="entry name" value="1-deoxy-D-xylulose-5-phosphate synthase"/>
    <property type="match status" value="1"/>
</dbReference>
<dbReference type="FunFam" id="3.40.50.970:FF:000005">
    <property type="entry name" value="1-deoxy-D-xylulose-5-phosphate synthase"/>
    <property type="match status" value="1"/>
</dbReference>
<dbReference type="Gene3D" id="3.40.50.920">
    <property type="match status" value="1"/>
</dbReference>
<dbReference type="Gene3D" id="3.40.50.970">
    <property type="match status" value="2"/>
</dbReference>
<dbReference type="HAMAP" id="MF_00315">
    <property type="entry name" value="DXP_synth"/>
    <property type="match status" value="1"/>
</dbReference>
<dbReference type="InterPro" id="IPR005477">
    <property type="entry name" value="Dxylulose-5-P_synthase"/>
</dbReference>
<dbReference type="InterPro" id="IPR029061">
    <property type="entry name" value="THDP-binding"/>
</dbReference>
<dbReference type="InterPro" id="IPR009014">
    <property type="entry name" value="Transketo_C/PFOR_II"/>
</dbReference>
<dbReference type="InterPro" id="IPR005475">
    <property type="entry name" value="Transketolase-like_Pyr-bd"/>
</dbReference>
<dbReference type="InterPro" id="IPR020826">
    <property type="entry name" value="Transketolase_BS"/>
</dbReference>
<dbReference type="InterPro" id="IPR033248">
    <property type="entry name" value="Transketolase_C"/>
</dbReference>
<dbReference type="NCBIfam" id="TIGR00204">
    <property type="entry name" value="dxs"/>
    <property type="match status" value="1"/>
</dbReference>
<dbReference type="NCBIfam" id="NF003933">
    <property type="entry name" value="PRK05444.2-2"/>
    <property type="match status" value="1"/>
</dbReference>
<dbReference type="PANTHER" id="PTHR43322">
    <property type="entry name" value="1-D-DEOXYXYLULOSE 5-PHOSPHATE SYNTHASE-RELATED"/>
    <property type="match status" value="1"/>
</dbReference>
<dbReference type="PANTHER" id="PTHR43322:SF5">
    <property type="entry name" value="1-DEOXY-D-XYLULOSE-5-PHOSPHATE SYNTHASE, CHLOROPLASTIC"/>
    <property type="match status" value="1"/>
</dbReference>
<dbReference type="Pfam" id="PF13292">
    <property type="entry name" value="DXP_synthase_N"/>
    <property type="match status" value="1"/>
</dbReference>
<dbReference type="Pfam" id="PF02779">
    <property type="entry name" value="Transket_pyr"/>
    <property type="match status" value="1"/>
</dbReference>
<dbReference type="Pfam" id="PF02780">
    <property type="entry name" value="Transketolase_C"/>
    <property type="match status" value="1"/>
</dbReference>
<dbReference type="SMART" id="SM00861">
    <property type="entry name" value="Transket_pyr"/>
    <property type="match status" value="1"/>
</dbReference>
<dbReference type="SUPFAM" id="SSF52518">
    <property type="entry name" value="Thiamin diphosphate-binding fold (THDP-binding)"/>
    <property type="match status" value="2"/>
</dbReference>
<dbReference type="SUPFAM" id="SSF52922">
    <property type="entry name" value="TK C-terminal domain-like"/>
    <property type="match status" value="1"/>
</dbReference>
<dbReference type="PROSITE" id="PS00802">
    <property type="entry name" value="TRANSKETOLASE_2"/>
    <property type="match status" value="1"/>
</dbReference>
<keyword id="KW-0414">Isoprene biosynthesis</keyword>
<keyword id="KW-0460">Magnesium</keyword>
<keyword id="KW-0479">Metal-binding</keyword>
<keyword id="KW-1185">Reference proteome</keyword>
<keyword id="KW-0784">Thiamine biosynthesis</keyword>
<keyword id="KW-0786">Thiamine pyrophosphate</keyword>
<keyword id="KW-0808">Transferase</keyword>
<feature type="chain" id="PRO_1000019066" description="1-deoxy-D-xylulose-5-phosphate synthase">
    <location>
        <begin position="1"/>
        <end position="632"/>
    </location>
</feature>
<feature type="binding site" evidence="1">
    <location>
        <position position="87"/>
    </location>
    <ligand>
        <name>thiamine diphosphate</name>
        <dbReference type="ChEBI" id="CHEBI:58937"/>
    </ligand>
</feature>
<feature type="binding site" evidence="1">
    <location>
        <begin position="128"/>
        <end position="130"/>
    </location>
    <ligand>
        <name>thiamine diphosphate</name>
        <dbReference type="ChEBI" id="CHEBI:58937"/>
    </ligand>
</feature>
<feature type="binding site" evidence="1">
    <location>
        <position position="159"/>
    </location>
    <ligand>
        <name>Mg(2+)</name>
        <dbReference type="ChEBI" id="CHEBI:18420"/>
    </ligand>
</feature>
<feature type="binding site" evidence="1">
    <location>
        <begin position="160"/>
        <end position="161"/>
    </location>
    <ligand>
        <name>thiamine diphosphate</name>
        <dbReference type="ChEBI" id="CHEBI:58937"/>
    </ligand>
</feature>
<feature type="binding site" evidence="1">
    <location>
        <position position="188"/>
    </location>
    <ligand>
        <name>Mg(2+)</name>
        <dbReference type="ChEBI" id="CHEBI:18420"/>
    </ligand>
</feature>
<feature type="binding site" evidence="1">
    <location>
        <position position="188"/>
    </location>
    <ligand>
        <name>thiamine diphosphate</name>
        <dbReference type="ChEBI" id="CHEBI:58937"/>
    </ligand>
</feature>
<feature type="binding site" evidence="1">
    <location>
        <position position="295"/>
    </location>
    <ligand>
        <name>thiamine diphosphate</name>
        <dbReference type="ChEBI" id="CHEBI:58937"/>
    </ligand>
</feature>
<feature type="binding site" evidence="1">
    <location>
        <position position="377"/>
    </location>
    <ligand>
        <name>thiamine diphosphate</name>
        <dbReference type="ChEBI" id="CHEBI:58937"/>
    </ligand>
</feature>
<accession>A4VQS8</accession>